<evidence type="ECO:0000255" key="1">
    <source>
        <dbReference type="HAMAP-Rule" id="MF_00019"/>
    </source>
</evidence>
<evidence type="ECO:0000256" key="2">
    <source>
        <dbReference type="SAM" id="MobiDB-lite"/>
    </source>
</evidence>
<protein>
    <recommendedName>
        <fullName evidence="1">Phosphate acyltransferase</fullName>
        <ecNumber evidence="1">2.3.1.274</ecNumber>
    </recommendedName>
    <alternativeName>
        <fullName evidence="1">Acyl-ACP phosphotransacylase</fullName>
    </alternativeName>
    <alternativeName>
        <fullName evidence="1">Acyl-[acyl-carrier-protein]--phosphate acyltransferase</fullName>
    </alternativeName>
    <alternativeName>
        <fullName evidence="1">Phosphate-acyl-ACP acyltransferase</fullName>
    </alternativeName>
</protein>
<gene>
    <name evidence="1" type="primary">plsX</name>
    <name type="ordered locus">Bind_3380</name>
</gene>
<feature type="chain" id="PRO_1000089879" description="Phosphate acyltransferase">
    <location>
        <begin position="1"/>
        <end position="386"/>
    </location>
</feature>
<feature type="region of interest" description="Disordered" evidence="2">
    <location>
        <begin position="359"/>
        <end position="386"/>
    </location>
</feature>
<feature type="compositionally biased region" description="Polar residues" evidence="2">
    <location>
        <begin position="377"/>
        <end position="386"/>
    </location>
</feature>
<name>PLSX_BEII9</name>
<comment type="function">
    <text evidence="1">Catalyzes the reversible formation of acyl-phosphate (acyl-PO(4)) from acyl-[acyl-carrier-protein] (acyl-ACP). This enzyme utilizes acyl-ACP as fatty acyl donor, but not acyl-CoA.</text>
</comment>
<comment type="catalytic activity">
    <reaction evidence="1">
        <text>a fatty acyl-[ACP] + phosphate = an acyl phosphate + holo-[ACP]</text>
        <dbReference type="Rhea" id="RHEA:42292"/>
        <dbReference type="Rhea" id="RHEA-COMP:9685"/>
        <dbReference type="Rhea" id="RHEA-COMP:14125"/>
        <dbReference type="ChEBI" id="CHEBI:43474"/>
        <dbReference type="ChEBI" id="CHEBI:59918"/>
        <dbReference type="ChEBI" id="CHEBI:64479"/>
        <dbReference type="ChEBI" id="CHEBI:138651"/>
        <dbReference type="EC" id="2.3.1.274"/>
    </reaction>
</comment>
<comment type="pathway">
    <text evidence="1">Lipid metabolism; phospholipid metabolism.</text>
</comment>
<comment type="subunit">
    <text evidence="1">Homodimer. Probably interacts with PlsY.</text>
</comment>
<comment type="subcellular location">
    <subcellularLocation>
        <location evidence="1">Cytoplasm</location>
    </subcellularLocation>
    <text evidence="1">Associated with the membrane possibly through PlsY.</text>
</comment>
<comment type="similarity">
    <text evidence="1">Belongs to the PlsX family.</text>
</comment>
<accession>B2IEJ5</accession>
<dbReference type="EC" id="2.3.1.274" evidence="1"/>
<dbReference type="EMBL" id="CP001016">
    <property type="protein sequence ID" value="ACB96937.1"/>
    <property type="molecule type" value="Genomic_DNA"/>
</dbReference>
<dbReference type="RefSeq" id="WP_012386285.1">
    <property type="nucleotide sequence ID" value="NC_010581.1"/>
</dbReference>
<dbReference type="SMR" id="B2IEJ5"/>
<dbReference type="STRING" id="395963.Bind_3380"/>
<dbReference type="KEGG" id="bid:Bind_3380"/>
<dbReference type="eggNOG" id="COG0416">
    <property type="taxonomic scope" value="Bacteria"/>
</dbReference>
<dbReference type="HOGENOM" id="CLU_039379_1_0_5"/>
<dbReference type="OrthoDB" id="9806408at2"/>
<dbReference type="UniPathway" id="UPA00085"/>
<dbReference type="Proteomes" id="UP000001695">
    <property type="component" value="Chromosome"/>
</dbReference>
<dbReference type="GO" id="GO:0005737">
    <property type="term" value="C:cytoplasm"/>
    <property type="evidence" value="ECO:0007669"/>
    <property type="project" value="UniProtKB-SubCell"/>
</dbReference>
<dbReference type="GO" id="GO:0043811">
    <property type="term" value="F:phosphate:acyl-[acyl carrier protein] acyltransferase activity"/>
    <property type="evidence" value="ECO:0007669"/>
    <property type="project" value="UniProtKB-UniRule"/>
</dbReference>
<dbReference type="GO" id="GO:0006633">
    <property type="term" value="P:fatty acid biosynthetic process"/>
    <property type="evidence" value="ECO:0007669"/>
    <property type="project" value="UniProtKB-UniRule"/>
</dbReference>
<dbReference type="GO" id="GO:0008654">
    <property type="term" value="P:phospholipid biosynthetic process"/>
    <property type="evidence" value="ECO:0007669"/>
    <property type="project" value="UniProtKB-KW"/>
</dbReference>
<dbReference type="Gene3D" id="3.40.718.10">
    <property type="entry name" value="Isopropylmalate Dehydrogenase"/>
    <property type="match status" value="1"/>
</dbReference>
<dbReference type="HAMAP" id="MF_00019">
    <property type="entry name" value="PlsX"/>
    <property type="match status" value="1"/>
</dbReference>
<dbReference type="InterPro" id="IPR003664">
    <property type="entry name" value="FA_synthesis"/>
</dbReference>
<dbReference type="InterPro" id="IPR012281">
    <property type="entry name" value="Phospholipid_synth_PlsX-like"/>
</dbReference>
<dbReference type="NCBIfam" id="TIGR00182">
    <property type="entry name" value="plsX"/>
    <property type="match status" value="1"/>
</dbReference>
<dbReference type="PANTHER" id="PTHR30100">
    <property type="entry name" value="FATTY ACID/PHOSPHOLIPID SYNTHESIS PROTEIN PLSX"/>
    <property type="match status" value="1"/>
</dbReference>
<dbReference type="PANTHER" id="PTHR30100:SF1">
    <property type="entry name" value="PHOSPHATE ACYLTRANSFERASE"/>
    <property type="match status" value="1"/>
</dbReference>
<dbReference type="Pfam" id="PF02504">
    <property type="entry name" value="FA_synthesis"/>
    <property type="match status" value="1"/>
</dbReference>
<dbReference type="PIRSF" id="PIRSF002465">
    <property type="entry name" value="Phsphlp_syn_PlsX"/>
    <property type="match status" value="1"/>
</dbReference>
<dbReference type="SUPFAM" id="SSF53659">
    <property type="entry name" value="Isocitrate/Isopropylmalate dehydrogenase-like"/>
    <property type="match status" value="1"/>
</dbReference>
<reference key="1">
    <citation type="journal article" date="2010" name="J. Bacteriol.">
        <title>Complete genome sequence of Beijerinckia indica subsp. indica.</title>
        <authorList>
            <person name="Tamas I."/>
            <person name="Dedysh S.N."/>
            <person name="Liesack W."/>
            <person name="Stott M.B."/>
            <person name="Alam M."/>
            <person name="Murrell J.C."/>
            <person name="Dunfield P.F."/>
        </authorList>
    </citation>
    <scope>NUCLEOTIDE SEQUENCE [LARGE SCALE GENOMIC DNA]</scope>
    <source>
        <strain>ATCC 9039 / DSM 1715 / NCIMB 8712</strain>
    </source>
</reference>
<proteinExistence type="inferred from homology"/>
<keyword id="KW-0963">Cytoplasm</keyword>
<keyword id="KW-0444">Lipid biosynthesis</keyword>
<keyword id="KW-0443">Lipid metabolism</keyword>
<keyword id="KW-0594">Phospholipid biosynthesis</keyword>
<keyword id="KW-1208">Phospholipid metabolism</keyword>
<keyword id="KW-1185">Reference proteome</keyword>
<keyword id="KW-0808">Transferase</keyword>
<sequence length="386" mass="41453">MLKPVRIALDAMGGDVGPQAIIPGAARALQRLGDVRFRFYGDRAQVEPLLRQHPALADVSSVHHTDVTVRMDDKPSQALRAGRRVSSMWQAIEAVKTGEADVVLSAGNTGALMAMAKVCLRMLPGIDRPAIAGIWPTLRGRSIVLDIGATIGADAPHLVDLAIMGAAMARIVLKVERPRIGLLNVGVEEIKGLEEVKTASRLLRQLTLPSLVYHGFVEGDDIGRGTVDVVVTEGFTGNIALKTAEGTAKQIAQYIREEMGRSFWSKIGYLLARRAFDALKQKLDPRQINGGVFLGLDGIVIKSHGGSDTIGTANAIEISYAMARYEILSKIRESLDLTREARAALLVEGTGSLERMAAPHRARQDELGENKVVGADQSMTAKATGT</sequence>
<organism>
    <name type="scientific">Beijerinckia indica subsp. indica (strain ATCC 9039 / DSM 1715 / NCIMB 8712)</name>
    <dbReference type="NCBI Taxonomy" id="395963"/>
    <lineage>
        <taxon>Bacteria</taxon>
        <taxon>Pseudomonadati</taxon>
        <taxon>Pseudomonadota</taxon>
        <taxon>Alphaproteobacteria</taxon>
        <taxon>Hyphomicrobiales</taxon>
        <taxon>Beijerinckiaceae</taxon>
        <taxon>Beijerinckia</taxon>
    </lineage>
</organism>